<accession>O25847</accession>
<proteinExistence type="inferred from homology"/>
<reference key="1">
    <citation type="journal article" date="1997" name="Nature">
        <title>The complete genome sequence of the gastric pathogen Helicobacter pylori.</title>
        <authorList>
            <person name="Tomb J.-F."/>
            <person name="White O."/>
            <person name="Kerlavage A.R."/>
            <person name="Clayton R.A."/>
            <person name="Sutton G.G."/>
            <person name="Fleischmann R.D."/>
            <person name="Ketchum K.A."/>
            <person name="Klenk H.-P."/>
            <person name="Gill S.R."/>
            <person name="Dougherty B.A."/>
            <person name="Nelson K.E."/>
            <person name="Quackenbush J."/>
            <person name="Zhou L."/>
            <person name="Kirkness E.F."/>
            <person name="Peterson S.N."/>
            <person name="Loftus B.J."/>
            <person name="Richardson D.L."/>
            <person name="Dodson R.J."/>
            <person name="Khalak H.G."/>
            <person name="Glodek A."/>
            <person name="McKenney K."/>
            <person name="FitzGerald L.M."/>
            <person name="Lee N."/>
            <person name="Adams M.D."/>
            <person name="Hickey E.K."/>
            <person name="Berg D.E."/>
            <person name="Gocayne J.D."/>
            <person name="Utterback T.R."/>
            <person name="Peterson J.D."/>
            <person name="Kelley J.M."/>
            <person name="Cotton M.D."/>
            <person name="Weidman J.F."/>
            <person name="Fujii C."/>
            <person name="Bowman C."/>
            <person name="Watthey L."/>
            <person name="Wallin E."/>
            <person name="Hayes W.S."/>
            <person name="Borodovsky M."/>
            <person name="Karp P.D."/>
            <person name="Smith H.O."/>
            <person name="Fraser C.M."/>
            <person name="Venter J.C."/>
        </authorList>
    </citation>
    <scope>NUCLEOTIDE SEQUENCE [LARGE SCALE GENOMIC DNA]</scope>
    <source>
        <strain>ATCC 700392 / 26695</strain>
    </source>
</reference>
<dbReference type="EMBL" id="AE000511">
    <property type="protein sequence ID" value="AAD08301.1"/>
    <property type="status" value="ALT_INIT"/>
    <property type="molecule type" value="Genomic_DNA"/>
</dbReference>
<dbReference type="PIR" id="G64676">
    <property type="entry name" value="G64676"/>
</dbReference>
<dbReference type="RefSeq" id="NP_208047.1">
    <property type="nucleotide sequence ID" value="NC_000915.1"/>
</dbReference>
<dbReference type="RefSeq" id="WP_001862740.1">
    <property type="nucleotide sequence ID" value="NC_018939.1"/>
</dbReference>
<dbReference type="SMR" id="O25847"/>
<dbReference type="DIP" id="DIP-3688N"/>
<dbReference type="IntAct" id="O25847">
    <property type="interactions" value="8"/>
</dbReference>
<dbReference type="MINT" id="O25847"/>
<dbReference type="STRING" id="85962.HP_1255"/>
<dbReference type="PaxDb" id="85962-C694_06485"/>
<dbReference type="DNASU" id="898868"/>
<dbReference type="EnsemblBacteria" id="AAD08301">
    <property type="protein sequence ID" value="AAD08301"/>
    <property type="gene ID" value="HP_1255"/>
</dbReference>
<dbReference type="KEGG" id="heo:C694_06485"/>
<dbReference type="KEGG" id="hpy:HP_1255"/>
<dbReference type="PATRIC" id="fig|85962.47.peg.1347"/>
<dbReference type="eggNOG" id="COG1314">
    <property type="taxonomic scope" value="Bacteria"/>
</dbReference>
<dbReference type="InParanoid" id="O25847"/>
<dbReference type="OrthoDB" id="5344625at2"/>
<dbReference type="Proteomes" id="UP000000429">
    <property type="component" value="Chromosome"/>
</dbReference>
<dbReference type="GO" id="GO:0005886">
    <property type="term" value="C:plasma membrane"/>
    <property type="evidence" value="ECO:0000318"/>
    <property type="project" value="GO_Central"/>
</dbReference>
<dbReference type="GO" id="GO:0015450">
    <property type="term" value="F:protein-transporting ATPase activity"/>
    <property type="evidence" value="ECO:0007669"/>
    <property type="project" value="InterPro"/>
</dbReference>
<dbReference type="GO" id="GO:0065002">
    <property type="term" value="P:intracellular protein transmembrane transport"/>
    <property type="evidence" value="ECO:0000318"/>
    <property type="project" value="GO_Central"/>
</dbReference>
<dbReference type="GO" id="GO:0009306">
    <property type="term" value="P:protein secretion"/>
    <property type="evidence" value="ECO:0007669"/>
    <property type="project" value="InterPro"/>
</dbReference>
<dbReference type="GO" id="GO:0043952">
    <property type="term" value="P:protein transport by the Sec complex"/>
    <property type="evidence" value="ECO:0000318"/>
    <property type="project" value="GO_Central"/>
</dbReference>
<dbReference type="InterPro" id="IPR004692">
    <property type="entry name" value="SecG"/>
</dbReference>
<dbReference type="NCBIfam" id="TIGR00810">
    <property type="entry name" value="secG"/>
    <property type="match status" value="1"/>
</dbReference>
<dbReference type="PANTHER" id="PTHR34182">
    <property type="entry name" value="PROTEIN-EXPORT MEMBRANE PROTEIN SECG"/>
    <property type="match status" value="1"/>
</dbReference>
<dbReference type="PANTHER" id="PTHR34182:SF1">
    <property type="entry name" value="PROTEIN-EXPORT MEMBRANE PROTEIN SECG"/>
    <property type="match status" value="1"/>
</dbReference>
<dbReference type="Pfam" id="PF03840">
    <property type="entry name" value="SecG"/>
    <property type="match status" value="1"/>
</dbReference>
<dbReference type="PRINTS" id="PR01651">
    <property type="entry name" value="SECGEXPORT"/>
</dbReference>
<name>SECG_HELPY</name>
<keyword id="KW-1003">Cell membrane</keyword>
<keyword id="KW-0472">Membrane</keyword>
<keyword id="KW-0653">Protein transport</keyword>
<keyword id="KW-1185">Reference proteome</keyword>
<keyword id="KW-0811">Translocation</keyword>
<keyword id="KW-0812">Transmembrane</keyword>
<keyword id="KW-1133">Transmembrane helix</keyword>
<keyword id="KW-0813">Transport</keyword>
<evidence type="ECO:0000250" key="1"/>
<evidence type="ECO:0000255" key="2"/>
<evidence type="ECO:0000256" key="3">
    <source>
        <dbReference type="SAM" id="MobiDB-lite"/>
    </source>
</evidence>
<evidence type="ECO:0000305" key="4"/>
<sequence>MTSALLGLQIVLAVLIVVVVLLQKSSSIGLGAYSGSNESLFGAKGPASFMAKLTMFLGLLFVINTIALGYFYNKEYGKSVLDETKTNKELSPLVPATGTLNPALNPTLNPTLNPLEQAPTNPLMPQQTPNELPKEPAKTPSVESPKQNEKNEKNDAKENGIKGVEKTKENAKTPPTTHQKPKTHATQTNAHTNQKKDEK</sequence>
<protein>
    <recommendedName>
        <fullName>Protein-export membrane protein SecG</fullName>
    </recommendedName>
</protein>
<gene>
    <name type="primary">secG</name>
    <name type="ordered locus">HP_1255</name>
</gene>
<feature type="chain" id="PRO_0000157229" description="Protein-export membrane protein SecG">
    <location>
        <begin position="1"/>
        <end position="199"/>
    </location>
</feature>
<feature type="transmembrane region" description="Helical" evidence="2">
    <location>
        <begin position="2"/>
        <end position="22"/>
    </location>
</feature>
<feature type="transmembrane region" description="Helical" evidence="2">
    <location>
        <begin position="49"/>
        <end position="69"/>
    </location>
</feature>
<feature type="region of interest" description="Disordered" evidence="3">
    <location>
        <begin position="92"/>
        <end position="199"/>
    </location>
</feature>
<feature type="compositionally biased region" description="Low complexity" evidence="3">
    <location>
        <begin position="97"/>
        <end position="115"/>
    </location>
</feature>
<feature type="compositionally biased region" description="Polar residues" evidence="3">
    <location>
        <begin position="118"/>
        <end position="130"/>
    </location>
</feature>
<feature type="compositionally biased region" description="Basic and acidic residues" evidence="3">
    <location>
        <begin position="146"/>
        <end position="171"/>
    </location>
</feature>
<feature type="compositionally biased region" description="Low complexity" evidence="3">
    <location>
        <begin position="172"/>
        <end position="188"/>
    </location>
</feature>
<organism>
    <name type="scientific">Helicobacter pylori (strain ATCC 700392 / 26695)</name>
    <name type="common">Campylobacter pylori</name>
    <dbReference type="NCBI Taxonomy" id="85962"/>
    <lineage>
        <taxon>Bacteria</taxon>
        <taxon>Pseudomonadati</taxon>
        <taxon>Campylobacterota</taxon>
        <taxon>Epsilonproteobacteria</taxon>
        <taxon>Campylobacterales</taxon>
        <taxon>Helicobacteraceae</taxon>
        <taxon>Helicobacter</taxon>
    </lineage>
</organism>
<comment type="function">
    <text evidence="1">Involved in protein export. Participates in an early event of protein translocation (By similarity).</text>
</comment>
<comment type="subcellular location">
    <subcellularLocation>
        <location evidence="1">Cell membrane</location>
        <topology evidence="1">Multi-pass membrane protein</topology>
    </subcellularLocation>
</comment>
<comment type="similarity">
    <text evidence="4">Belongs to the SecG family.</text>
</comment>
<comment type="sequence caution" evidence="4">
    <conflict type="erroneous initiation">
        <sequence resource="EMBL-CDS" id="AAD08301"/>
    </conflict>
</comment>